<evidence type="ECO:0000255" key="1">
    <source>
        <dbReference type="HAMAP-Rule" id="MF_00161"/>
    </source>
</evidence>
<organism>
    <name type="scientific">Haemophilus ducreyi (strain 35000HP / ATCC 700724)</name>
    <dbReference type="NCBI Taxonomy" id="233412"/>
    <lineage>
        <taxon>Bacteria</taxon>
        <taxon>Pseudomonadati</taxon>
        <taxon>Pseudomonadota</taxon>
        <taxon>Gammaproteobacteria</taxon>
        <taxon>Pasteurellales</taxon>
        <taxon>Pasteurellaceae</taxon>
        <taxon>Haemophilus</taxon>
    </lineage>
</organism>
<feature type="chain" id="PRO_0000178782" description="Lipoprotein signal peptidase">
    <location>
        <begin position="1"/>
        <end position="161"/>
    </location>
</feature>
<feature type="transmembrane region" description="Helical" evidence="1">
    <location>
        <begin position="9"/>
        <end position="29"/>
    </location>
</feature>
<feature type="transmembrane region" description="Helical" evidence="1">
    <location>
        <begin position="64"/>
        <end position="84"/>
    </location>
</feature>
<feature type="transmembrane region" description="Helical" evidence="1">
    <location>
        <begin position="96"/>
        <end position="113"/>
    </location>
</feature>
<feature type="transmembrane region" description="Helical" evidence="1">
    <location>
        <begin position="133"/>
        <end position="153"/>
    </location>
</feature>
<feature type="active site" evidence="1">
    <location>
        <position position="120"/>
    </location>
</feature>
<feature type="active site" evidence="1">
    <location>
        <position position="138"/>
    </location>
</feature>
<accession>Q7VPK5</accession>
<comment type="function">
    <text evidence="1">This protein specifically catalyzes the removal of signal peptides from prolipoproteins.</text>
</comment>
<comment type="catalytic activity">
    <reaction evidence="1">
        <text>Release of signal peptides from bacterial membrane prolipoproteins. Hydrolyzes -Xaa-Yaa-Zaa-|-(S,diacylglyceryl)Cys-, in which Xaa is hydrophobic (preferably Leu), and Yaa (Ala or Ser) and Zaa (Gly or Ala) have small, neutral side chains.</text>
        <dbReference type="EC" id="3.4.23.36"/>
    </reaction>
</comment>
<comment type="pathway">
    <text evidence="1">Protein modification; lipoprotein biosynthesis (signal peptide cleavage).</text>
</comment>
<comment type="subcellular location">
    <subcellularLocation>
        <location evidence="1">Cell inner membrane</location>
        <topology evidence="1">Multi-pass membrane protein</topology>
    </subcellularLocation>
</comment>
<comment type="similarity">
    <text evidence="1">Belongs to the peptidase A8 family.</text>
</comment>
<sequence length="161" mass="18649">MAKQSGIKWLWLSLVVITLDLFSKYLVVERFELYESINILPIFNLTYARNYGAAFSFLADHSGWQKYLFLTLAIIISFILANVLRRNQIDQKRENMAYALIIGGAIGNAIDRAYRGYVVDFFDFYWHIYHYPVFNIADVAIVMGAGLLILETFLDKKKKSD</sequence>
<reference key="1">
    <citation type="submission" date="2003-06" db="EMBL/GenBank/DDBJ databases">
        <title>The complete genome sequence of Haemophilus ducreyi.</title>
        <authorList>
            <person name="Munson R.S. Jr."/>
            <person name="Ray W.C."/>
            <person name="Mahairas G."/>
            <person name="Sabo P."/>
            <person name="Mungur R."/>
            <person name="Johnson L."/>
            <person name="Nguyen D."/>
            <person name="Wang J."/>
            <person name="Forst C."/>
            <person name="Hood L."/>
        </authorList>
    </citation>
    <scope>NUCLEOTIDE SEQUENCE [LARGE SCALE GENOMIC DNA]</scope>
    <source>
        <strain>35000HP / ATCC 700724</strain>
    </source>
</reference>
<protein>
    <recommendedName>
        <fullName evidence="1">Lipoprotein signal peptidase</fullName>
        <ecNumber evidence="1">3.4.23.36</ecNumber>
    </recommendedName>
    <alternativeName>
        <fullName evidence="1">Prolipoprotein signal peptidase</fullName>
    </alternativeName>
    <alternativeName>
        <fullName evidence="1">Signal peptidase II</fullName>
        <shortName evidence="1">SPase II</shortName>
    </alternativeName>
</protein>
<name>LSPA_HAEDU</name>
<gene>
    <name evidence="1" type="primary">lspA</name>
    <name type="ordered locus">HD_0063</name>
</gene>
<proteinExistence type="inferred from homology"/>
<keyword id="KW-0064">Aspartyl protease</keyword>
<keyword id="KW-0997">Cell inner membrane</keyword>
<keyword id="KW-1003">Cell membrane</keyword>
<keyword id="KW-0378">Hydrolase</keyword>
<keyword id="KW-0472">Membrane</keyword>
<keyword id="KW-0645">Protease</keyword>
<keyword id="KW-1185">Reference proteome</keyword>
<keyword id="KW-0812">Transmembrane</keyword>
<keyword id="KW-1133">Transmembrane helix</keyword>
<dbReference type="EC" id="3.4.23.36" evidence="1"/>
<dbReference type="EMBL" id="AE017143">
    <property type="protein sequence ID" value="AAP95075.1"/>
    <property type="molecule type" value="Genomic_DNA"/>
</dbReference>
<dbReference type="SMR" id="Q7VPK5"/>
<dbReference type="STRING" id="233412.HD_0063"/>
<dbReference type="MEROPS" id="A08.001"/>
<dbReference type="KEGG" id="hdu:HD_0063"/>
<dbReference type="eggNOG" id="COG0597">
    <property type="taxonomic scope" value="Bacteria"/>
</dbReference>
<dbReference type="HOGENOM" id="CLU_083252_4_0_6"/>
<dbReference type="OrthoDB" id="9810259at2"/>
<dbReference type="UniPathway" id="UPA00665"/>
<dbReference type="Proteomes" id="UP000001022">
    <property type="component" value="Chromosome"/>
</dbReference>
<dbReference type="GO" id="GO:0005886">
    <property type="term" value="C:plasma membrane"/>
    <property type="evidence" value="ECO:0007669"/>
    <property type="project" value="UniProtKB-SubCell"/>
</dbReference>
<dbReference type="GO" id="GO:0004190">
    <property type="term" value="F:aspartic-type endopeptidase activity"/>
    <property type="evidence" value="ECO:0007669"/>
    <property type="project" value="UniProtKB-UniRule"/>
</dbReference>
<dbReference type="GO" id="GO:0006508">
    <property type="term" value="P:proteolysis"/>
    <property type="evidence" value="ECO:0007669"/>
    <property type="project" value="UniProtKB-KW"/>
</dbReference>
<dbReference type="HAMAP" id="MF_00161">
    <property type="entry name" value="LspA"/>
    <property type="match status" value="1"/>
</dbReference>
<dbReference type="InterPro" id="IPR001872">
    <property type="entry name" value="Peptidase_A8"/>
</dbReference>
<dbReference type="NCBIfam" id="TIGR00077">
    <property type="entry name" value="lspA"/>
    <property type="match status" value="1"/>
</dbReference>
<dbReference type="PANTHER" id="PTHR33695">
    <property type="entry name" value="LIPOPROTEIN SIGNAL PEPTIDASE"/>
    <property type="match status" value="1"/>
</dbReference>
<dbReference type="PANTHER" id="PTHR33695:SF1">
    <property type="entry name" value="LIPOPROTEIN SIGNAL PEPTIDASE"/>
    <property type="match status" value="1"/>
</dbReference>
<dbReference type="Pfam" id="PF01252">
    <property type="entry name" value="Peptidase_A8"/>
    <property type="match status" value="1"/>
</dbReference>
<dbReference type="PRINTS" id="PR00781">
    <property type="entry name" value="LIPOSIGPTASE"/>
</dbReference>
<dbReference type="PROSITE" id="PS00855">
    <property type="entry name" value="SPASE_II"/>
    <property type="match status" value="1"/>
</dbReference>